<dbReference type="EC" id="2.4.2.1" evidence="1"/>
<dbReference type="EC" id="2.4.2.2" evidence="1"/>
<dbReference type="EMBL" id="CR555306">
    <property type="protein sequence ID" value="CAI09019.1"/>
    <property type="molecule type" value="Genomic_DNA"/>
</dbReference>
<dbReference type="RefSeq" id="WP_011238700.1">
    <property type="nucleotide sequence ID" value="NC_006513.1"/>
</dbReference>
<dbReference type="SMR" id="Q5P0Z5"/>
<dbReference type="STRING" id="76114.ebD86"/>
<dbReference type="KEGG" id="eba:ebD86"/>
<dbReference type="eggNOG" id="COG3123">
    <property type="taxonomic scope" value="Bacteria"/>
</dbReference>
<dbReference type="HOGENOM" id="CLU_157874_1_0_4"/>
<dbReference type="OrthoDB" id="9793848at2"/>
<dbReference type="Proteomes" id="UP000006552">
    <property type="component" value="Chromosome"/>
</dbReference>
<dbReference type="GO" id="GO:0005829">
    <property type="term" value="C:cytosol"/>
    <property type="evidence" value="ECO:0007669"/>
    <property type="project" value="TreeGrafter"/>
</dbReference>
<dbReference type="GO" id="GO:0047975">
    <property type="term" value="F:guanosine phosphorylase activity"/>
    <property type="evidence" value="ECO:0007669"/>
    <property type="project" value="UniProtKB-EC"/>
</dbReference>
<dbReference type="GO" id="GO:0004731">
    <property type="term" value="F:purine-nucleoside phosphorylase activity"/>
    <property type="evidence" value="ECO:0007669"/>
    <property type="project" value="UniProtKB-UniRule"/>
</dbReference>
<dbReference type="GO" id="GO:0009032">
    <property type="term" value="F:thymidine phosphorylase activity"/>
    <property type="evidence" value="ECO:0007669"/>
    <property type="project" value="UniProtKB-EC"/>
</dbReference>
<dbReference type="GO" id="GO:0004850">
    <property type="term" value="F:uridine phosphorylase activity"/>
    <property type="evidence" value="ECO:0007669"/>
    <property type="project" value="UniProtKB-EC"/>
</dbReference>
<dbReference type="CDD" id="cd20296">
    <property type="entry name" value="cupin_PpnP-like"/>
    <property type="match status" value="1"/>
</dbReference>
<dbReference type="Gene3D" id="2.60.120.10">
    <property type="entry name" value="Jelly Rolls"/>
    <property type="match status" value="1"/>
</dbReference>
<dbReference type="HAMAP" id="MF_01537">
    <property type="entry name" value="Nucleos_phosphorylase_PpnP"/>
    <property type="match status" value="1"/>
</dbReference>
<dbReference type="InterPro" id="IPR009664">
    <property type="entry name" value="Ppnp"/>
</dbReference>
<dbReference type="InterPro" id="IPR014710">
    <property type="entry name" value="RmlC-like_jellyroll"/>
</dbReference>
<dbReference type="InterPro" id="IPR011051">
    <property type="entry name" value="RmlC_Cupin_sf"/>
</dbReference>
<dbReference type="PANTHER" id="PTHR36540">
    <property type="entry name" value="PYRIMIDINE/PURINE NUCLEOSIDE PHOSPHORYLASE"/>
    <property type="match status" value="1"/>
</dbReference>
<dbReference type="PANTHER" id="PTHR36540:SF1">
    <property type="entry name" value="PYRIMIDINE_PURINE NUCLEOSIDE PHOSPHORYLASE"/>
    <property type="match status" value="1"/>
</dbReference>
<dbReference type="Pfam" id="PF06865">
    <property type="entry name" value="Ppnp"/>
    <property type="match status" value="1"/>
</dbReference>
<dbReference type="SUPFAM" id="SSF51182">
    <property type="entry name" value="RmlC-like cupins"/>
    <property type="match status" value="1"/>
</dbReference>
<protein>
    <recommendedName>
        <fullName evidence="1">Pyrimidine/purine nucleoside phosphorylase</fullName>
        <ecNumber evidence="1">2.4.2.1</ecNumber>
        <ecNumber evidence="1">2.4.2.2</ecNumber>
    </recommendedName>
    <alternativeName>
        <fullName evidence="1">Adenosine phosphorylase</fullName>
    </alternativeName>
    <alternativeName>
        <fullName evidence="1">Cytidine phosphorylase</fullName>
    </alternativeName>
    <alternativeName>
        <fullName evidence="1">Guanosine phosphorylase</fullName>
    </alternativeName>
    <alternativeName>
        <fullName evidence="1">Inosine phosphorylase</fullName>
    </alternativeName>
    <alternativeName>
        <fullName evidence="1">Thymidine phosphorylase</fullName>
    </alternativeName>
    <alternativeName>
        <fullName evidence="1">Uridine phosphorylase</fullName>
    </alternativeName>
    <alternativeName>
        <fullName evidence="1">Xanthosine phosphorylase</fullName>
    </alternativeName>
</protein>
<sequence>MSLTEKFDSVTVATKANVYFDGKCVSHGIVLADGTKKSVGVILPATLTFNTGAPEIMEGVAGSCRVRLKGESEWTVYGAGESFNVPANSSFDIEVAGEPYHYVCHFG</sequence>
<proteinExistence type="inferred from homology"/>
<gene>
    <name evidence="1" type="primary">ppnP</name>
    <name type="ordered locus">AZOSEA28940</name>
    <name type="ORF">ebD86</name>
</gene>
<evidence type="ECO:0000255" key="1">
    <source>
        <dbReference type="HAMAP-Rule" id="MF_01537"/>
    </source>
</evidence>
<name>PPNP_AROAE</name>
<keyword id="KW-0328">Glycosyltransferase</keyword>
<keyword id="KW-1185">Reference proteome</keyword>
<keyword id="KW-0808">Transferase</keyword>
<comment type="function">
    <text evidence="1">Catalyzes the phosphorolysis of diverse nucleosides, yielding D-ribose 1-phosphate and the respective free bases. Can use uridine, adenosine, guanosine, cytidine, thymidine, inosine and xanthosine as substrates. Also catalyzes the reverse reactions.</text>
</comment>
<comment type="catalytic activity">
    <reaction evidence="1">
        <text>a purine D-ribonucleoside + phosphate = a purine nucleobase + alpha-D-ribose 1-phosphate</text>
        <dbReference type="Rhea" id="RHEA:19805"/>
        <dbReference type="ChEBI" id="CHEBI:26386"/>
        <dbReference type="ChEBI" id="CHEBI:43474"/>
        <dbReference type="ChEBI" id="CHEBI:57720"/>
        <dbReference type="ChEBI" id="CHEBI:142355"/>
        <dbReference type="EC" id="2.4.2.1"/>
    </reaction>
</comment>
<comment type="catalytic activity">
    <reaction evidence="1">
        <text>adenosine + phosphate = alpha-D-ribose 1-phosphate + adenine</text>
        <dbReference type="Rhea" id="RHEA:27642"/>
        <dbReference type="ChEBI" id="CHEBI:16335"/>
        <dbReference type="ChEBI" id="CHEBI:16708"/>
        <dbReference type="ChEBI" id="CHEBI:43474"/>
        <dbReference type="ChEBI" id="CHEBI:57720"/>
        <dbReference type="EC" id="2.4.2.1"/>
    </reaction>
</comment>
<comment type="catalytic activity">
    <reaction evidence="1">
        <text>cytidine + phosphate = cytosine + alpha-D-ribose 1-phosphate</text>
        <dbReference type="Rhea" id="RHEA:52540"/>
        <dbReference type="ChEBI" id="CHEBI:16040"/>
        <dbReference type="ChEBI" id="CHEBI:17562"/>
        <dbReference type="ChEBI" id="CHEBI:43474"/>
        <dbReference type="ChEBI" id="CHEBI:57720"/>
        <dbReference type="EC" id="2.4.2.2"/>
    </reaction>
</comment>
<comment type="catalytic activity">
    <reaction evidence="1">
        <text>guanosine + phosphate = alpha-D-ribose 1-phosphate + guanine</text>
        <dbReference type="Rhea" id="RHEA:13233"/>
        <dbReference type="ChEBI" id="CHEBI:16235"/>
        <dbReference type="ChEBI" id="CHEBI:16750"/>
        <dbReference type="ChEBI" id="CHEBI:43474"/>
        <dbReference type="ChEBI" id="CHEBI:57720"/>
        <dbReference type="EC" id="2.4.2.1"/>
    </reaction>
</comment>
<comment type="catalytic activity">
    <reaction evidence="1">
        <text>inosine + phosphate = alpha-D-ribose 1-phosphate + hypoxanthine</text>
        <dbReference type="Rhea" id="RHEA:27646"/>
        <dbReference type="ChEBI" id="CHEBI:17368"/>
        <dbReference type="ChEBI" id="CHEBI:17596"/>
        <dbReference type="ChEBI" id="CHEBI:43474"/>
        <dbReference type="ChEBI" id="CHEBI:57720"/>
        <dbReference type="EC" id="2.4.2.1"/>
    </reaction>
</comment>
<comment type="catalytic activity">
    <reaction evidence="1">
        <text>thymidine + phosphate = 2-deoxy-alpha-D-ribose 1-phosphate + thymine</text>
        <dbReference type="Rhea" id="RHEA:16037"/>
        <dbReference type="ChEBI" id="CHEBI:17748"/>
        <dbReference type="ChEBI" id="CHEBI:17821"/>
        <dbReference type="ChEBI" id="CHEBI:43474"/>
        <dbReference type="ChEBI" id="CHEBI:57259"/>
        <dbReference type="EC" id="2.4.2.2"/>
    </reaction>
</comment>
<comment type="catalytic activity">
    <reaction evidence="1">
        <text>uridine + phosphate = alpha-D-ribose 1-phosphate + uracil</text>
        <dbReference type="Rhea" id="RHEA:24388"/>
        <dbReference type="ChEBI" id="CHEBI:16704"/>
        <dbReference type="ChEBI" id="CHEBI:17568"/>
        <dbReference type="ChEBI" id="CHEBI:43474"/>
        <dbReference type="ChEBI" id="CHEBI:57720"/>
        <dbReference type="EC" id="2.4.2.2"/>
    </reaction>
</comment>
<comment type="catalytic activity">
    <reaction evidence="1">
        <text>xanthosine + phosphate = alpha-D-ribose 1-phosphate + xanthine</text>
        <dbReference type="Rhea" id="RHEA:27638"/>
        <dbReference type="ChEBI" id="CHEBI:17712"/>
        <dbReference type="ChEBI" id="CHEBI:18107"/>
        <dbReference type="ChEBI" id="CHEBI:43474"/>
        <dbReference type="ChEBI" id="CHEBI:57720"/>
        <dbReference type="EC" id="2.4.2.1"/>
    </reaction>
</comment>
<comment type="similarity">
    <text evidence="1">Belongs to the nucleoside phosphorylase PpnP family.</text>
</comment>
<reference key="1">
    <citation type="journal article" date="2005" name="Arch. Microbiol.">
        <title>The genome sequence of an anaerobic aromatic-degrading denitrifying bacterium, strain EbN1.</title>
        <authorList>
            <person name="Rabus R."/>
            <person name="Kube M."/>
            <person name="Heider J."/>
            <person name="Beck A."/>
            <person name="Heitmann K."/>
            <person name="Widdel F."/>
            <person name="Reinhardt R."/>
        </authorList>
    </citation>
    <scope>NUCLEOTIDE SEQUENCE [LARGE SCALE GENOMIC DNA]</scope>
    <source>
        <strain>DSM 19018 / LMG 30748 / EbN1</strain>
    </source>
</reference>
<accession>Q5P0Z5</accession>
<organism>
    <name type="scientific">Aromatoleum aromaticum (strain DSM 19018 / LMG 30748 / EbN1)</name>
    <name type="common">Azoarcus sp. (strain EbN1)</name>
    <dbReference type="NCBI Taxonomy" id="76114"/>
    <lineage>
        <taxon>Bacteria</taxon>
        <taxon>Pseudomonadati</taxon>
        <taxon>Pseudomonadota</taxon>
        <taxon>Betaproteobacteria</taxon>
        <taxon>Rhodocyclales</taxon>
        <taxon>Rhodocyclaceae</taxon>
        <taxon>Aromatoleum</taxon>
    </lineage>
</organism>
<feature type="chain" id="PRO_0000211762" description="Pyrimidine/purine nucleoside phosphorylase">
    <location>
        <begin position="1"/>
        <end position="107"/>
    </location>
</feature>